<comment type="function">
    <text evidence="1">NAD-binding protein involved in the addition of a carboxymethylaminomethyl (cmnm) group at the wobble position (U34) of certain tRNAs, forming tRNA-cmnm(5)s(2)U34.</text>
</comment>
<comment type="cofactor">
    <cofactor evidence="1">
        <name>FAD</name>
        <dbReference type="ChEBI" id="CHEBI:57692"/>
    </cofactor>
</comment>
<comment type="subunit">
    <text evidence="1">Homodimer. Heterotetramer of two MnmE and two MnmG subunits.</text>
</comment>
<comment type="subcellular location">
    <subcellularLocation>
        <location evidence="1">Cytoplasm</location>
    </subcellularLocation>
</comment>
<comment type="similarity">
    <text evidence="1">Belongs to the MnmG family.</text>
</comment>
<protein>
    <recommendedName>
        <fullName evidence="1">tRNA uridine 5-carboxymethylaminomethyl modification enzyme MnmG</fullName>
    </recommendedName>
    <alternativeName>
        <fullName evidence="1">Glucose-inhibited division protein A</fullName>
    </alternativeName>
</protein>
<reference key="1">
    <citation type="submission" date="2006-12" db="EMBL/GenBank/DDBJ databases">
        <title>Complete sequence of Halorhodospira halophila SL1.</title>
        <authorList>
            <consortium name="US DOE Joint Genome Institute"/>
            <person name="Copeland A."/>
            <person name="Lucas S."/>
            <person name="Lapidus A."/>
            <person name="Barry K."/>
            <person name="Detter J.C."/>
            <person name="Glavina del Rio T."/>
            <person name="Hammon N."/>
            <person name="Israni S."/>
            <person name="Dalin E."/>
            <person name="Tice H."/>
            <person name="Pitluck S."/>
            <person name="Saunders E."/>
            <person name="Brettin T."/>
            <person name="Bruce D."/>
            <person name="Han C."/>
            <person name="Tapia R."/>
            <person name="Schmutz J."/>
            <person name="Larimer F."/>
            <person name="Land M."/>
            <person name="Hauser L."/>
            <person name="Kyrpides N."/>
            <person name="Mikhailova N."/>
            <person name="Hoff W."/>
            <person name="Richardson P."/>
        </authorList>
    </citation>
    <scope>NUCLEOTIDE SEQUENCE [LARGE SCALE GENOMIC DNA]</scope>
    <source>
        <strain>DSM 244 / SL1</strain>
    </source>
</reference>
<dbReference type="EMBL" id="CP000544">
    <property type="protein sequence ID" value="ABM60797.1"/>
    <property type="molecule type" value="Genomic_DNA"/>
</dbReference>
<dbReference type="RefSeq" id="WP_011812820.1">
    <property type="nucleotide sequence ID" value="NC_008789.1"/>
</dbReference>
<dbReference type="SMR" id="A1WSY5"/>
<dbReference type="STRING" id="349124.Hhal_0002"/>
<dbReference type="KEGG" id="hha:Hhal_0002"/>
<dbReference type="eggNOG" id="COG0445">
    <property type="taxonomic scope" value="Bacteria"/>
</dbReference>
<dbReference type="HOGENOM" id="CLU_007831_2_2_6"/>
<dbReference type="OrthoDB" id="9815560at2"/>
<dbReference type="Proteomes" id="UP000000647">
    <property type="component" value="Chromosome"/>
</dbReference>
<dbReference type="GO" id="GO:0005829">
    <property type="term" value="C:cytosol"/>
    <property type="evidence" value="ECO:0007669"/>
    <property type="project" value="TreeGrafter"/>
</dbReference>
<dbReference type="GO" id="GO:0050660">
    <property type="term" value="F:flavin adenine dinucleotide binding"/>
    <property type="evidence" value="ECO:0007669"/>
    <property type="project" value="UniProtKB-UniRule"/>
</dbReference>
<dbReference type="GO" id="GO:0030488">
    <property type="term" value="P:tRNA methylation"/>
    <property type="evidence" value="ECO:0007669"/>
    <property type="project" value="TreeGrafter"/>
</dbReference>
<dbReference type="GO" id="GO:0002098">
    <property type="term" value="P:tRNA wobble uridine modification"/>
    <property type="evidence" value="ECO:0007669"/>
    <property type="project" value="InterPro"/>
</dbReference>
<dbReference type="FunFam" id="1.10.150.570:FF:000001">
    <property type="entry name" value="tRNA uridine 5-carboxymethylaminomethyl modification enzyme MnmG"/>
    <property type="match status" value="1"/>
</dbReference>
<dbReference type="FunFam" id="3.50.50.60:FF:000002">
    <property type="entry name" value="tRNA uridine 5-carboxymethylaminomethyl modification enzyme MnmG"/>
    <property type="match status" value="1"/>
</dbReference>
<dbReference type="FunFam" id="3.50.50.60:FF:000010">
    <property type="entry name" value="tRNA uridine 5-carboxymethylaminomethyl modification enzyme MnmG"/>
    <property type="match status" value="1"/>
</dbReference>
<dbReference type="Gene3D" id="3.50.50.60">
    <property type="entry name" value="FAD/NAD(P)-binding domain"/>
    <property type="match status" value="2"/>
</dbReference>
<dbReference type="Gene3D" id="1.10.150.570">
    <property type="entry name" value="GidA associated domain, C-terminal subdomain"/>
    <property type="match status" value="1"/>
</dbReference>
<dbReference type="Gene3D" id="1.10.10.1800">
    <property type="entry name" value="tRNA uridine 5-carboxymethylaminomethyl modification enzyme MnmG/GidA"/>
    <property type="match status" value="1"/>
</dbReference>
<dbReference type="HAMAP" id="MF_00129">
    <property type="entry name" value="MnmG_GidA"/>
    <property type="match status" value="1"/>
</dbReference>
<dbReference type="InterPro" id="IPR036188">
    <property type="entry name" value="FAD/NAD-bd_sf"/>
</dbReference>
<dbReference type="InterPro" id="IPR049312">
    <property type="entry name" value="GIDA_C_N"/>
</dbReference>
<dbReference type="InterPro" id="IPR004416">
    <property type="entry name" value="MnmG"/>
</dbReference>
<dbReference type="InterPro" id="IPR002218">
    <property type="entry name" value="MnmG-rel"/>
</dbReference>
<dbReference type="InterPro" id="IPR020595">
    <property type="entry name" value="MnmG-rel_CS"/>
</dbReference>
<dbReference type="InterPro" id="IPR026904">
    <property type="entry name" value="MnmG_C"/>
</dbReference>
<dbReference type="InterPro" id="IPR047001">
    <property type="entry name" value="MnmG_C_subdom"/>
</dbReference>
<dbReference type="InterPro" id="IPR044920">
    <property type="entry name" value="MnmG_C_subdom_sf"/>
</dbReference>
<dbReference type="InterPro" id="IPR040131">
    <property type="entry name" value="MnmG_N"/>
</dbReference>
<dbReference type="NCBIfam" id="TIGR00136">
    <property type="entry name" value="mnmG_gidA"/>
    <property type="match status" value="1"/>
</dbReference>
<dbReference type="PANTHER" id="PTHR11806">
    <property type="entry name" value="GLUCOSE INHIBITED DIVISION PROTEIN A"/>
    <property type="match status" value="1"/>
</dbReference>
<dbReference type="PANTHER" id="PTHR11806:SF0">
    <property type="entry name" value="PROTEIN MTO1 HOMOLOG, MITOCHONDRIAL"/>
    <property type="match status" value="1"/>
</dbReference>
<dbReference type="Pfam" id="PF01134">
    <property type="entry name" value="GIDA"/>
    <property type="match status" value="1"/>
</dbReference>
<dbReference type="Pfam" id="PF21680">
    <property type="entry name" value="GIDA_C_1st"/>
    <property type="match status" value="1"/>
</dbReference>
<dbReference type="Pfam" id="PF13932">
    <property type="entry name" value="SAM_GIDA_C"/>
    <property type="match status" value="1"/>
</dbReference>
<dbReference type="SMART" id="SM01228">
    <property type="entry name" value="GIDA_assoc_3"/>
    <property type="match status" value="1"/>
</dbReference>
<dbReference type="SUPFAM" id="SSF51905">
    <property type="entry name" value="FAD/NAD(P)-binding domain"/>
    <property type="match status" value="1"/>
</dbReference>
<dbReference type="PROSITE" id="PS01280">
    <property type="entry name" value="GIDA_1"/>
    <property type="match status" value="1"/>
</dbReference>
<dbReference type="PROSITE" id="PS01281">
    <property type="entry name" value="GIDA_2"/>
    <property type="match status" value="1"/>
</dbReference>
<proteinExistence type="inferred from homology"/>
<feature type="chain" id="PRO_1000076320" description="tRNA uridine 5-carboxymethylaminomethyl modification enzyme MnmG">
    <location>
        <begin position="1"/>
        <end position="633"/>
    </location>
</feature>
<feature type="binding site" evidence="1">
    <location>
        <begin position="12"/>
        <end position="17"/>
    </location>
    <ligand>
        <name>FAD</name>
        <dbReference type="ChEBI" id="CHEBI:57692"/>
    </ligand>
</feature>
<feature type="binding site" evidence="1">
    <location>
        <begin position="272"/>
        <end position="286"/>
    </location>
    <ligand>
        <name>NAD(+)</name>
        <dbReference type="ChEBI" id="CHEBI:57540"/>
    </ligand>
</feature>
<organism>
    <name type="scientific">Halorhodospira halophila (strain DSM 244 / SL1)</name>
    <name type="common">Ectothiorhodospira halophila (strain DSM 244 / SL1)</name>
    <dbReference type="NCBI Taxonomy" id="349124"/>
    <lineage>
        <taxon>Bacteria</taxon>
        <taxon>Pseudomonadati</taxon>
        <taxon>Pseudomonadota</taxon>
        <taxon>Gammaproteobacteria</taxon>
        <taxon>Chromatiales</taxon>
        <taxon>Ectothiorhodospiraceae</taxon>
        <taxon>Halorhodospira</taxon>
    </lineage>
</organism>
<accession>A1WSY5</accession>
<sequence>MNTNRFDVIVIGGGHAGTEAAAAAARLGRSTLLITHNLETIGALSCNPAIGGIGKGHLVREIDALGGVMGRLADASAIHARVLNQRKGPAVRATRIQADRPTYARAARRALDALPGLALLQDAAEELLVADQRCYGVRTESGATLHADAVVVTAGTFLAGQIHIGHVQHSAGRAGDPAADRLSASLRDLGLAVHRLKTGTPPRIDRRTVAVEQLDAQHGDTPRPLFSPFRPPEAPLPEAACLISWTTPETHRIIRDALDHSPMYSGAIQSSGPRYCPSIEDKVVRFADRDHHQVFLEPEGLDATELYPNGVSTGLPFTVQEALIRSMPGLEAARITRPGYAIEYDYLDPRGLTPWLESATIAGLYLAGQINGTTGYEEAAAQGLIAGLNAARVSAGEDPWFPTREEAYIGVLIDDLVTTGVTEPYRMFTSRAEHRLRLRDDNAEDRLTEVGRRLGSVGDDQWTRFARYRDALNAERARLNGTRVHPGRLTASQQARLGGALRRDQTLFDLLRRPELSYDDVRFIGGLEEADLPVRAVQQLEIEARYDGYVERQELENQRHQRYAQVRLPEALDYAAIDGLSTEVRERLTRMRPATVGQAARLPGVTPAAISLLLIHLRRRGWLRTPTGGEDAA</sequence>
<keyword id="KW-0963">Cytoplasm</keyword>
<keyword id="KW-0274">FAD</keyword>
<keyword id="KW-0285">Flavoprotein</keyword>
<keyword id="KW-0520">NAD</keyword>
<keyword id="KW-1185">Reference proteome</keyword>
<keyword id="KW-0819">tRNA processing</keyword>
<evidence type="ECO:0000255" key="1">
    <source>
        <dbReference type="HAMAP-Rule" id="MF_00129"/>
    </source>
</evidence>
<name>MNMG_HALHL</name>
<gene>
    <name evidence="1" type="primary">mnmG</name>
    <name evidence="1" type="synonym">gidA</name>
    <name type="ordered locus">Hhal_0002</name>
</gene>